<comment type="function">
    <text evidence="6">May function as RNase and regulate the levels of target RNA species.</text>
</comment>
<comment type="cofactor">
    <cofactor evidence="6">
        <name>Mg(2+)</name>
        <dbReference type="ChEBI" id="CHEBI:18420"/>
    </cofactor>
</comment>
<comment type="induction">
    <text evidence="5">By bacterial lipopolysaccharides (LPS) in macrophage cell line RAW 264.7.</text>
</comment>
<comment type="similarity">
    <text evidence="6">Belongs to the ZC3H12 family.</text>
</comment>
<dbReference type="EC" id="3.1.-.-"/>
<dbReference type="EMBL" id="CT009732">
    <property type="status" value="NOT_ANNOTATED_CDS"/>
    <property type="molecule type" value="Genomic_DNA"/>
</dbReference>
<dbReference type="EMBL" id="AK220416">
    <property type="protein sequence ID" value="BAD90462.1"/>
    <property type="molecule type" value="mRNA"/>
</dbReference>
<dbReference type="RefSeq" id="NP_001156393.1">
    <property type="nucleotide sequence ID" value="NM_001162921.1"/>
</dbReference>
<dbReference type="RefSeq" id="XP_006510396.1">
    <property type="nucleotide sequence ID" value="XM_006510333.4"/>
</dbReference>
<dbReference type="PDB" id="7NDH">
    <property type="method" value="X-ray"/>
    <property type="resolution" value="1.94 A"/>
    <property type="chains" value="A/B=241-409"/>
</dbReference>
<dbReference type="PDB" id="7NDI">
    <property type="method" value="X-ray"/>
    <property type="resolution" value="2.88 A"/>
    <property type="chains" value="A/B/C/D=242-406"/>
</dbReference>
<dbReference type="PDB" id="7NDJ">
    <property type="method" value="X-ray"/>
    <property type="resolution" value="1.65 A"/>
    <property type="chains" value="A/B=243-434"/>
</dbReference>
<dbReference type="PDB" id="7NDK">
    <property type="method" value="X-ray"/>
    <property type="resolution" value="2.34 A"/>
    <property type="chains" value="A/B/C/D=242-405"/>
</dbReference>
<dbReference type="PDBsum" id="7NDH"/>
<dbReference type="PDBsum" id="7NDI"/>
<dbReference type="PDBsum" id="7NDJ"/>
<dbReference type="PDBsum" id="7NDK"/>
<dbReference type="SMR" id="Q5DTV4"/>
<dbReference type="BioGRID" id="232696">
    <property type="interactions" value="5"/>
</dbReference>
<dbReference type="FunCoup" id="Q5DTV4">
    <property type="interactions" value="1376"/>
</dbReference>
<dbReference type="STRING" id="10090.ENSMUSP00000127603"/>
<dbReference type="iPTMnet" id="Q5DTV4"/>
<dbReference type="PhosphoSitePlus" id="Q5DTV4"/>
<dbReference type="PaxDb" id="10090-ENSMUSP00000127603"/>
<dbReference type="ProteomicsDB" id="275130"/>
<dbReference type="Antibodypedia" id="45577">
    <property type="antibodies" value="50 antibodies from 23 providers"/>
</dbReference>
<dbReference type="Ensembl" id="ENSMUST00000213645.2">
    <property type="protein sequence ID" value="ENSMUSP00000150821.2"/>
    <property type="gene ID" value="ENSMUSG00000035164.9"/>
</dbReference>
<dbReference type="GeneID" id="244871"/>
<dbReference type="KEGG" id="mmu:244871"/>
<dbReference type="AGR" id="MGI:3026959"/>
<dbReference type="CTD" id="85463"/>
<dbReference type="MGI" id="MGI:3026959">
    <property type="gene designation" value="Zc3h12c"/>
</dbReference>
<dbReference type="VEuPathDB" id="HostDB:ENSMUSG00000035164"/>
<dbReference type="eggNOG" id="KOG3777">
    <property type="taxonomic scope" value="Eukaryota"/>
</dbReference>
<dbReference type="GeneTree" id="ENSGT00940000158397"/>
<dbReference type="InParanoid" id="Q5DTV4"/>
<dbReference type="OMA" id="RSPDCRY"/>
<dbReference type="OrthoDB" id="392925at2759"/>
<dbReference type="PhylomeDB" id="Q5DTV4"/>
<dbReference type="BioGRID-ORCS" id="244871">
    <property type="hits" value="2 hits in 77 CRISPR screens"/>
</dbReference>
<dbReference type="ChiTaRS" id="Zc3h12c">
    <property type="organism name" value="mouse"/>
</dbReference>
<dbReference type="PRO" id="PR:Q5DTV4"/>
<dbReference type="Proteomes" id="UP000000589">
    <property type="component" value="Chromosome 9"/>
</dbReference>
<dbReference type="RNAct" id="Q5DTV4">
    <property type="molecule type" value="protein"/>
</dbReference>
<dbReference type="Bgee" id="ENSMUSG00000035164">
    <property type="expression patterns" value="Expressed in optic fissure and 235 other cell types or tissues"/>
</dbReference>
<dbReference type="ExpressionAtlas" id="Q5DTV4">
    <property type="expression patterns" value="baseline and differential"/>
</dbReference>
<dbReference type="GO" id="GO:0004519">
    <property type="term" value="F:endonuclease activity"/>
    <property type="evidence" value="ECO:0007669"/>
    <property type="project" value="UniProtKB-KW"/>
</dbReference>
<dbReference type="GO" id="GO:0008270">
    <property type="term" value="F:zinc ion binding"/>
    <property type="evidence" value="ECO:0007669"/>
    <property type="project" value="UniProtKB-KW"/>
</dbReference>
<dbReference type="CDD" id="cd18729">
    <property type="entry name" value="PIN_Zc3h12-like"/>
    <property type="match status" value="1"/>
</dbReference>
<dbReference type="FunFam" id="3.40.50.11980:FF:000001">
    <property type="entry name" value="ZC3H12A isoform 1"/>
    <property type="match status" value="1"/>
</dbReference>
<dbReference type="Gene3D" id="3.40.50.11980">
    <property type="match status" value="1"/>
</dbReference>
<dbReference type="InterPro" id="IPR040546">
    <property type="entry name" value="Rege-1_UBA-like"/>
</dbReference>
<dbReference type="InterPro" id="IPR040757">
    <property type="entry name" value="Regnase_1/ZC3H12_C"/>
</dbReference>
<dbReference type="InterPro" id="IPR021869">
    <property type="entry name" value="RNase_Zc3h12_NYN"/>
</dbReference>
<dbReference type="InterPro" id="IPR051101">
    <property type="entry name" value="ZC3H12/N4BP1_RNase_Reg"/>
</dbReference>
<dbReference type="InterPro" id="IPR000571">
    <property type="entry name" value="Znf_CCCH"/>
</dbReference>
<dbReference type="PANTHER" id="PTHR12876">
    <property type="entry name" value="N4BP1-RELATED"/>
    <property type="match status" value="1"/>
</dbReference>
<dbReference type="PANTHER" id="PTHR12876:SF36">
    <property type="entry name" value="RIBONUCLEASE ZC3H12C-RELATED"/>
    <property type="match status" value="1"/>
</dbReference>
<dbReference type="Pfam" id="PF18561">
    <property type="entry name" value="Regnase_1_C"/>
    <property type="match status" value="1"/>
</dbReference>
<dbReference type="Pfam" id="PF11977">
    <property type="entry name" value="RNase_Zc3h12a"/>
    <property type="match status" value="1"/>
</dbReference>
<dbReference type="Pfam" id="PF18039">
    <property type="entry name" value="UBA_6"/>
    <property type="match status" value="1"/>
</dbReference>
<dbReference type="PROSITE" id="PS50103">
    <property type="entry name" value="ZF_C3H1"/>
    <property type="match status" value="1"/>
</dbReference>
<reference key="1">
    <citation type="journal article" date="2009" name="PLoS Biol.">
        <title>Lineage-specific biology revealed by a finished genome assembly of the mouse.</title>
        <authorList>
            <person name="Church D.M."/>
            <person name="Goodstadt L."/>
            <person name="Hillier L.W."/>
            <person name="Zody M.C."/>
            <person name="Goldstein S."/>
            <person name="She X."/>
            <person name="Bult C.J."/>
            <person name="Agarwala R."/>
            <person name="Cherry J.L."/>
            <person name="DiCuccio M."/>
            <person name="Hlavina W."/>
            <person name="Kapustin Y."/>
            <person name="Meric P."/>
            <person name="Maglott D."/>
            <person name="Birtle Z."/>
            <person name="Marques A.C."/>
            <person name="Graves T."/>
            <person name="Zhou S."/>
            <person name="Teague B."/>
            <person name="Potamousis K."/>
            <person name="Churas C."/>
            <person name="Place M."/>
            <person name="Herschleb J."/>
            <person name="Runnheim R."/>
            <person name="Forrest D."/>
            <person name="Amos-Landgraf J."/>
            <person name="Schwartz D.C."/>
            <person name="Cheng Z."/>
            <person name="Lindblad-Toh K."/>
            <person name="Eichler E.E."/>
            <person name="Ponting C.P."/>
        </authorList>
    </citation>
    <scope>NUCLEOTIDE SEQUENCE [LARGE SCALE GENOMIC DNA]</scope>
    <source>
        <strain>C57BL/6J</strain>
    </source>
</reference>
<reference key="2">
    <citation type="submission" date="2005-02" db="EMBL/GenBank/DDBJ databases">
        <title>Prediction of the coding sequences of mouse homologues of KIAA gene. The complete nucleotide sequences of mouse KIAA-homologous cDNAs identified by screening of terminal sequences of cDNA clones randomly sampled from size-fractionated libraries.</title>
        <authorList>
            <person name="Okazaki N."/>
            <person name="Kikuno R.F."/>
            <person name="Ohara R."/>
            <person name="Inamoto S."/>
            <person name="Nagase T."/>
            <person name="Ohara O."/>
            <person name="Koga H."/>
        </authorList>
    </citation>
    <scope>NUCLEOTIDE SEQUENCE [LARGE SCALE MRNA] OF 272-884</scope>
    <source>
        <tissue>Brain</tissue>
    </source>
</reference>
<reference key="3">
    <citation type="journal article" date="2008" name="J. Biol. Chem.">
        <title>A novel CCCH-zinc finger protein family regulates proinflammatory activation of macrophages.</title>
        <authorList>
            <person name="Liang J."/>
            <person name="Wang J."/>
            <person name="Azfer A."/>
            <person name="Song W."/>
            <person name="Tromp G."/>
            <person name="Kolattukudy P.E."/>
            <person name="Fu M."/>
        </authorList>
    </citation>
    <scope>IDENTIFICATION</scope>
    <scope>INDUCTION</scope>
</reference>
<reference key="4">
    <citation type="journal article" date="2010" name="Cell">
        <title>A tissue-specific atlas of mouse protein phosphorylation and expression.</title>
        <authorList>
            <person name="Huttlin E.L."/>
            <person name="Jedrychowski M.P."/>
            <person name="Elias J.E."/>
            <person name="Goswami T."/>
            <person name="Rad R."/>
            <person name="Beausoleil S.A."/>
            <person name="Villen J."/>
            <person name="Haas W."/>
            <person name="Sowa M.E."/>
            <person name="Gygi S.P."/>
        </authorList>
    </citation>
    <scope>IDENTIFICATION BY MASS SPECTROMETRY [LARGE SCALE ANALYSIS]</scope>
    <source>
        <tissue>Kidney</tissue>
    </source>
</reference>
<keyword id="KW-0002">3D-structure</keyword>
<keyword id="KW-0255">Endonuclease</keyword>
<keyword id="KW-0378">Hydrolase</keyword>
<keyword id="KW-0460">Magnesium</keyword>
<keyword id="KW-0479">Metal-binding</keyword>
<keyword id="KW-0540">Nuclease</keyword>
<keyword id="KW-0597">Phosphoprotein</keyword>
<keyword id="KW-1185">Reference proteome</keyword>
<keyword id="KW-0862">Zinc</keyword>
<keyword id="KW-0863">Zinc-finger</keyword>
<feature type="chain" id="PRO_0000337844" description="Probable ribonuclease ZC3H12C">
    <location>
        <begin position="1"/>
        <end position="884"/>
    </location>
</feature>
<feature type="domain" description="RNase NYN" evidence="2">
    <location>
        <begin position="246"/>
        <end position="401"/>
    </location>
</feature>
<feature type="zinc finger region" description="C3H1-type" evidence="3">
    <location>
        <begin position="411"/>
        <end position="436"/>
    </location>
</feature>
<feature type="region of interest" description="Disordered" evidence="4">
    <location>
        <begin position="66"/>
        <end position="108"/>
    </location>
</feature>
<feature type="region of interest" description="Disordered" evidence="4">
    <location>
        <begin position="456"/>
        <end position="548"/>
    </location>
</feature>
<feature type="region of interest" description="Disordered" evidence="4">
    <location>
        <begin position="716"/>
        <end position="739"/>
    </location>
</feature>
<feature type="region of interest" description="Disordered" evidence="4">
    <location>
        <begin position="755"/>
        <end position="776"/>
    </location>
</feature>
<feature type="compositionally biased region" description="Low complexity" evidence="4">
    <location>
        <begin position="87"/>
        <end position="96"/>
    </location>
</feature>
<feature type="compositionally biased region" description="Polar residues" evidence="4">
    <location>
        <begin position="456"/>
        <end position="478"/>
    </location>
</feature>
<feature type="compositionally biased region" description="Basic and acidic residues" evidence="4">
    <location>
        <begin position="500"/>
        <end position="516"/>
    </location>
</feature>
<feature type="compositionally biased region" description="Polar residues" evidence="4">
    <location>
        <begin position="518"/>
        <end position="543"/>
    </location>
</feature>
<feature type="modified residue" description="Phosphoserine" evidence="1">
    <location>
        <position position="231"/>
    </location>
</feature>
<feature type="strand" evidence="7">
    <location>
        <begin position="244"/>
        <end position="246"/>
    </location>
</feature>
<feature type="strand" evidence="8">
    <location>
        <begin position="249"/>
        <end position="252"/>
    </location>
</feature>
<feature type="helix" evidence="8">
    <location>
        <begin position="253"/>
        <end position="259"/>
    </location>
</feature>
<feature type="strand" evidence="8">
    <location>
        <begin position="260"/>
        <end position="262"/>
    </location>
</feature>
<feature type="strand" evidence="8">
    <location>
        <begin position="265"/>
        <end position="267"/>
    </location>
</feature>
<feature type="helix" evidence="8">
    <location>
        <begin position="268"/>
        <end position="280"/>
    </location>
</feature>
<feature type="strand" evidence="8">
    <location>
        <begin position="286"/>
        <end position="291"/>
    </location>
</feature>
<feature type="helix" evidence="8">
    <location>
        <begin position="292"/>
        <end position="295"/>
    </location>
</feature>
<feature type="strand" evidence="7">
    <location>
        <begin position="300"/>
        <end position="302"/>
    </location>
</feature>
<feature type="strand" evidence="8">
    <location>
        <begin position="304"/>
        <end position="306"/>
    </location>
</feature>
<feature type="helix" evidence="8">
    <location>
        <begin position="308"/>
        <end position="315"/>
    </location>
</feature>
<feature type="strand" evidence="8">
    <location>
        <begin position="318"/>
        <end position="322"/>
    </location>
</feature>
<feature type="strand" evidence="8">
    <location>
        <begin position="324"/>
        <end position="327"/>
    </location>
</feature>
<feature type="strand" evidence="8">
    <location>
        <begin position="330"/>
        <end position="333"/>
    </location>
</feature>
<feature type="helix" evidence="8">
    <location>
        <begin position="336"/>
        <end position="346"/>
    </location>
</feature>
<feature type="strand" evidence="8">
    <location>
        <begin position="350"/>
        <end position="352"/>
    </location>
</feature>
<feature type="helix" evidence="8">
    <location>
        <begin position="358"/>
        <end position="363"/>
    </location>
</feature>
<feature type="helix" evidence="8">
    <location>
        <begin position="365"/>
        <end position="374"/>
    </location>
</feature>
<feature type="strand" evidence="8">
    <location>
        <begin position="379"/>
        <end position="381"/>
    </location>
</feature>
<feature type="strand" evidence="8">
    <location>
        <begin position="384"/>
        <end position="386"/>
    </location>
</feature>
<feature type="helix" evidence="8">
    <location>
        <begin position="399"/>
        <end position="402"/>
    </location>
</feature>
<feature type="strand" evidence="8">
    <location>
        <begin position="404"/>
        <end position="406"/>
    </location>
</feature>
<feature type="helix" evidence="8">
    <location>
        <begin position="412"/>
        <end position="414"/>
    </location>
</feature>
<feature type="helix" evidence="8">
    <location>
        <begin position="420"/>
        <end position="422"/>
    </location>
</feature>
<feature type="helix" evidence="8">
    <location>
        <begin position="426"/>
        <end position="428"/>
    </location>
</feature>
<organism>
    <name type="scientific">Mus musculus</name>
    <name type="common">Mouse</name>
    <dbReference type="NCBI Taxonomy" id="10090"/>
    <lineage>
        <taxon>Eukaryota</taxon>
        <taxon>Metazoa</taxon>
        <taxon>Chordata</taxon>
        <taxon>Craniata</taxon>
        <taxon>Vertebrata</taxon>
        <taxon>Euteleostomi</taxon>
        <taxon>Mammalia</taxon>
        <taxon>Eutheria</taxon>
        <taxon>Euarchontoglires</taxon>
        <taxon>Glires</taxon>
        <taxon>Rodentia</taxon>
        <taxon>Myomorpha</taxon>
        <taxon>Muroidea</taxon>
        <taxon>Muridae</taxon>
        <taxon>Murinae</taxon>
        <taxon>Mus</taxon>
        <taxon>Mus</taxon>
    </lineage>
</organism>
<sequence length="884" mass="99430">MAAEKTLQEYGVLCIQEYRKSSKVESSARNSFMGLKDHLGHDLGHLYMESTDPQMSAAVPWPMVEKPTMDTVNSGKEGKGVSEENVSSGDSEGSTSSDHESEQLSSLSVEPCSLTKTHRQLCRSPCLEPRLLKHSDILQDFKPEESQTPSKEVKKPPDVVREYQTKLEFALKLGYSEEQVQLVLNKLGTDALINDILGELVKLGNKSEADQTVSTINSVMRETSSLESQRSESPMQEVVVDDGENLRPVVIDGSNVAMSHGNKEVFSCRGIKLAVDWFLERGHKDITVFVPAWRKEQSRPDALITDQEILRKLEKEKILVFTPSRRVQGRRVVCYDDRFIVKLAFESDGIIVSNDNYRDLANEKPEWKKFIDERLLMYSFVNDKFMPPDDPLGRHGPSLDNFLRKKPIVPEHKKQPCPYGKKCTYGHKCKYYHPERGSQPQRSVADELRAMSRNTAAKTTNEGGLVKSNSVPCSTKADSTSDVKRGAPKRQSDPSIRTHVYQDIEEKLPTKNKLETRSVPSLVSIPATSTAKPQSTTPLSNGLPSGVHFPPQDQRPQGQYPPMMMATKNHGTPMPYEQYPKCDSPVDVGYYSMLNAYSNLSISGPRSPERRFSLDTDYRVNSVASDCSSEGSMSCGSSDSYVGYNDRSYVSSPDPQLEESLKCQHMHPHSRLNSQPFLQNFHDPLTRVQSYSHEEPKFHPKRPLPHLAMHLQHPAVGARSSCPGDYPSPPSSAHSKAPHLGRSLVATRIDSISDSRLYDSSPSRQRKPYSRQEGLGSWGRPSYGLEAYGYRQTYSLPDNSTPPCYESITFQSLPEQQEPTWRIPYCGMPHDPPRYQDNREKIFINLCNIFPPDLVRLVMKRNPHMTDAQQLAAAILVEKSQLGY</sequence>
<accession>Q5DTV4</accession>
<name>ZC12C_MOUSE</name>
<proteinExistence type="evidence at protein level"/>
<gene>
    <name type="primary">Zc3h12c</name>
    <name type="synonym">Kiaa1726</name>
</gene>
<evidence type="ECO:0000250" key="1">
    <source>
        <dbReference type="UniProtKB" id="Q9C0D7"/>
    </source>
</evidence>
<evidence type="ECO:0000255" key="2"/>
<evidence type="ECO:0000255" key="3">
    <source>
        <dbReference type="PROSITE-ProRule" id="PRU00723"/>
    </source>
</evidence>
<evidence type="ECO:0000256" key="4">
    <source>
        <dbReference type="SAM" id="MobiDB-lite"/>
    </source>
</evidence>
<evidence type="ECO:0000269" key="5">
    <source>
    </source>
</evidence>
<evidence type="ECO:0000305" key="6"/>
<evidence type="ECO:0007829" key="7">
    <source>
        <dbReference type="PDB" id="7NDI"/>
    </source>
</evidence>
<evidence type="ECO:0007829" key="8">
    <source>
        <dbReference type="PDB" id="7NDJ"/>
    </source>
</evidence>
<protein>
    <recommendedName>
        <fullName>Probable ribonuclease ZC3H12C</fullName>
        <ecNumber>3.1.-.-</ecNumber>
    </recommendedName>
    <alternativeName>
        <fullName>Zinc finger CCCH domain-containing protein 12C</fullName>
    </alternativeName>
</protein>